<evidence type="ECO:0000255" key="1">
    <source>
        <dbReference type="HAMAP-Rule" id="MF_01407"/>
    </source>
</evidence>
<organism>
    <name type="scientific">Methanospirillum hungatei JF-1 (strain ATCC 27890 / DSM 864 / NBRC 100397 / JF-1)</name>
    <dbReference type="NCBI Taxonomy" id="323259"/>
    <lineage>
        <taxon>Archaea</taxon>
        <taxon>Methanobacteriati</taxon>
        <taxon>Methanobacteriota</taxon>
        <taxon>Stenosarchaea group</taxon>
        <taxon>Methanomicrobia</taxon>
        <taxon>Methanomicrobiales</taxon>
        <taxon>Methanospirillaceae</taxon>
        <taxon>Methanospirillum</taxon>
    </lineage>
</organism>
<dbReference type="EMBL" id="CP000254">
    <property type="protein sequence ID" value="ABD42171.1"/>
    <property type="molecule type" value="Genomic_DNA"/>
</dbReference>
<dbReference type="RefSeq" id="WP_011449429.1">
    <property type="nucleotide sequence ID" value="NC_007796.1"/>
</dbReference>
<dbReference type="SMR" id="Q2FN79"/>
<dbReference type="STRING" id="323259.Mhun_2471"/>
<dbReference type="EnsemblBacteria" id="ABD42171">
    <property type="protein sequence ID" value="ABD42171"/>
    <property type="gene ID" value="Mhun_2471"/>
</dbReference>
<dbReference type="GeneID" id="3923976"/>
<dbReference type="KEGG" id="mhu:Mhun_2471"/>
<dbReference type="eggNOG" id="arCOG00467">
    <property type="taxonomic scope" value="Archaea"/>
</dbReference>
<dbReference type="HOGENOM" id="CLU_025112_3_1_2"/>
<dbReference type="InParanoid" id="Q2FN79"/>
<dbReference type="OrthoDB" id="195574at2157"/>
<dbReference type="Proteomes" id="UP000001941">
    <property type="component" value="Chromosome"/>
</dbReference>
<dbReference type="GO" id="GO:0005524">
    <property type="term" value="F:ATP binding"/>
    <property type="evidence" value="ECO:0007669"/>
    <property type="project" value="UniProtKB-UniRule"/>
</dbReference>
<dbReference type="GO" id="GO:0016887">
    <property type="term" value="F:ATP hydrolysis activity"/>
    <property type="evidence" value="ECO:0007669"/>
    <property type="project" value="InterPro"/>
</dbReference>
<dbReference type="GO" id="GO:0006260">
    <property type="term" value="P:DNA replication"/>
    <property type="evidence" value="ECO:0007669"/>
    <property type="project" value="UniProtKB-UniRule"/>
</dbReference>
<dbReference type="CDD" id="cd00009">
    <property type="entry name" value="AAA"/>
    <property type="match status" value="1"/>
</dbReference>
<dbReference type="CDD" id="cd08768">
    <property type="entry name" value="Cdc6_C"/>
    <property type="match status" value="1"/>
</dbReference>
<dbReference type="FunFam" id="1.10.8.60:FF:000073">
    <property type="entry name" value="ORC1-type DNA replication protein"/>
    <property type="match status" value="1"/>
</dbReference>
<dbReference type="FunFam" id="3.40.50.300:FF:000930">
    <property type="entry name" value="ORC1-type DNA replication protein"/>
    <property type="match status" value="1"/>
</dbReference>
<dbReference type="Gene3D" id="1.10.8.60">
    <property type="match status" value="1"/>
</dbReference>
<dbReference type="Gene3D" id="3.40.50.300">
    <property type="entry name" value="P-loop containing nucleotide triphosphate hydrolases"/>
    <property type="match status" value="1"/>
</dbReference>
<dbReference type="Gene3D" id="1.10.10.10">
    <property type="entry name" value="Winged helix-like DNA-binding domain superfamily/Winged helix DNA-binding domain"/>
    <property type="match status" value="1"/>
</dbReference>
<dbReference type="HAMAP" id="MF_01407">
    <property type="entry name" value="ORC1_type_DNA_replic_protein"/>
    <property type="match status" value="1"/>
</dbReference>
<dbReference type="InterPro" id="IPR003593">
    <property type="entry name" value="AAA+_ATPase"/>
</dbReference>
<dbReference type="InterPro" id="IPR041664">
    <property type="entry name" value="AAA_16"/>
</dbReference>
<dbReference type="InterPro" id="IPR015163">
    <property type="entry name" value="Cdc6_C"/>
</dbReference>
<dbReference type="InterPro" id="IPR055237">
    <property type="entry name" value="Cdc6_lid"/>
</dbReference>
<dbReference type="InterPro" id="IPR050311">
    <property type="entry name" value="ORC1/CDC6"/>
</dbReference>
<dbReference type="InterPro" id="IPR014277">
    <property type="entry name" value="Orc1/Cdc6_arc"/>
</dbReference>
<dbReference type="InterPro" id="IPR027417">
    <property type="entry name" value="P-loop_NTPase"/>
</dbReference>
<dbReference type="InterPro" id="IPR036388">
    <property type="entry name" value="WH-like_DNA-bd_sf"/>
</dbReference>
<dbReference type="InterPro" id="IPR036390">
    <property type="entry name" value="WH_DNA-bd_sf"/>
</dbReference>
<dbReference type="NCBIfam" id="TIGR02928">
    <property type="entry name" value="orc1/cdc6 family replication initiation protein"/>
    <property type="match status" value="1"/>
</dbReference>
<dbReference type="NCBIfam" id="NF001625">
    <property type="entry name" value="PRK00411.1-3"/>
    <property type="match status" value="1"/>
</dbReference>
<dbReference type="PANTHER" id="PTHR10763">
    <property type="entry name" value="CELL DIVISION CONTROL PROTEIN 6-RELATED"/>
    <property type="match status" value="1"/>
</dbReference>
<dbReference type="PANTHER" id="PTHR10763:SF22">
    <property type="entry name" value="ORC1-TYPE DNA REPLICATION PROTEIN"/>
    <property type="match status" value="1"/>
</dbReference>
<dbReference type="Pfam" id="PF13191">
    <property type="entry name" value="AAA_16"/>
    <property type="match status" value="1"/>
</dbReference>
<dbReference type="Pfam" id="PF09079">
    <property type="entry name" value="Cdc6_C"/>
    <property type="match status" value="1"/>
</dbReference>
<dbReference type="Pfam" id="PF22703">
    <property type="entry name" value="Cdc6_lid"/>
    <property type="match status" value="1"/>
</dbReference>
<dbReference type="SMART" id="SM00382">
    <property type="entry name" value="AAA"/>
    <property type="match status" value="1"/>
</dbReference>
<dbReference type="SMART" id="SM01074">
    <property type="entry name" value="Cdc6_C"/>
    <property type="match status" value="1"/>
</dbReference>
<dbReference type="SUPFAM" id="SSF52540">
    <property type="entry name" value="P-loop containing nucleoside triphosphate hydrolases"/>
    <property type="match status" value="1"/>
</dbReference>
<dbReference type="SUPFAM" id="SSF46785">
    <property type="entry name" value="Winged helix' DNA-binding domain"/>
    <property type="match status" value="1"/>
</dbReference>
<keyword id="KW-0067">ATP-binding</keyword>
<keyword id="KW-0235">DNA replication</keyword>
<keyword id="KW-0547">Nucleotide-binding</keyword>
<keyword id="KW-1185">Reference proteome</keyword>
<gene>
    <name type="primary">cdc6</name>
    <name type="ordered locus">Mhun_2471</name>
</gene>
<reference key="1">
    <citation type="journal article" date="2016" name="Stand. Genomic Sci.">
        <title>Complete genome sequence of Methanospirillum hungatei type strain JF1.</title>
        <authorList>
            <person name="Gunsalus R.P."/>
            <person name="Cook L.E."/>
            <person name="Crable B."/>
            <person name="Rohlin L."/>
            <person name="McDonald E."/>
            <person name="Mouttaki H."/>
            <person name="Sieber J.R."/>
            <person name="Poweleit N."/>
            <person name="Zhou H."/>
            <person name="Lapidus A.L."/>
            <person name="Daligault H.E."/>
            <person name="Land M."/>
            <person name="Gilna P."/>
            <person name="Ivanova N."/>
            <person name="Kyrpides N."/>
            <person name="Culley D.E."/>
            <person name="McInerney M.J."/>
        </authorList>
    </citation>
    <scope>NUCLEOTIDE SEQUENCE [LARGE SCALE GENOMIC DNA]</scope>
    <source>
        <strain>ATCC 27890 / DSM 864 / NBRC 100397 / JF-1</strain>
    </source>
</reference>
<sequence length="424" mass="47966">MTQDMNDSPGLFDKYLSENRIFRDREVLRHSYRPHILPHRKPQIDQIAAILAPALQTETPSNILIYGKTGTGKTASVRYVGSELESVSARRGTVCRVIHLNCEVIDTQYRVLAQISKLIMGEDETPSDKIKTHIPMTGWPTDQVYSELKNQIELNSGVFIIILDEIDKLVKKSGDDTLYNLTRINTDLNRSKVSIIGISNDLGFKTFLDPRVLSSLSEEELVFPPYNAPQLCDILQQRAVIGFAEDALEDEVIPLCAALAAQEHGDARRALDLLRISGELADRENGSKVTVEHVKKAQAKIETDSMVECIRTLPTQSKIVLYCMLLLHRAGQRIFISGDVTRIYKELTPFLEIDVLTARRISDLISELNMLGVINTRLVNRGRHGRTKEMWFDTNTDKIWEVIMEESDGRLAQVDEQIVVQILR</sequence>
<feature type="chain" id="PRO_0000307416" description="ORC1-type DNA replication protein">
    <location>
        <begin position="1"/>
        <end position="424"/>
    </location>
</feature>
<feature type="binding site" evidence="1">
    <location>
        <begin position="71"/>
        <end position="75"/>
    </location>
    <ligand>
        <name>ATP</name>
        <dbReference type="ChEBI" id="CHEBI:30616"/>
    </ligand>
</feature>
<feature type="binding site" evidence="1">
    <location>
        <position position="226"/>
    </location>
    <ligand>
        <name>ATP</name>
        <dbReference type="ChEBI" id="CHEBI:30616"/>
    </ligand>
</feature>
<feature type="binding site" evidence="1">
    <location>
        <position position="238"/>
    </location>
    <ligand>
        <name>ATP</name>
        <dbReference type="ChEBI" id="CHEBI:30616"/>
    </ligand>
</feature>
<accession>Q2FN79</accession>
<comment type="function">
    <text evidence="1">Involved in regulation of DNA replication.</text>
</comment>
<comment type="similarity">
    <text evidence="1">Belongs to the CDC6/cdc18 family.</text>
</comment>
<name>CDC6_METHJ</name>
<proteinExistence type="inferred from homology"/>
<protein>
    <recommendedName>
        <fullName evidence="1">ORC1-type DNA replication protein</fullName>
    </recommendedName>
</protein>